<evidence type="ECO:0000255" key="1"/>
<evidence type="ECO:0000305" key="2"/>
<sequence length="1052" mass="115821">MLEKIIRFSLKHRWFVLLFTLVIAILGVYNFQRLPIDAVPDITNVQVQINTQASGYSPFEVEQRITFPIELAMSGLPSLDYTRSLSRYGLSQVTVVFKDGTNIYFARQLINERLQEVKDKLPPGVETTLGPISTGLGEIFMYTVTNKPNVPISQHYNPTELRTIQDWIIKPQLRNVEGVAEVNTIGGYEKQFHITPDPSKLVRYRLSLNDVVEALERNNANVGAGYIETNGEQNLIRVPGQVQNMADIENIVIASFEGTPVRIRDVAEVALGKELRTGAATENSKEVVLGTVFILMGENSRTVSERVAAKMKDINKTLPEGVEAITVYNRTTLVNATINTVKNNLLEGALLVCVILFLFLGNIRAALITAMVIPLSMLLTITGMVENQISANLMSLGALDFGLIVDGAVIIVENCIKHLAEQQHALHRVLNLEERLKVISYATTEVIRPSIFGVFIITVVYLPILTLTGVEGKMFLPMAQTVIIALLASMLFALTFVPAAVAIFLRGHLQEKENWLVHYLSLGYAKVLRRCFHARRVVISAAVALVVVSLGIAFHLGGEFIPSLDEGDIAMHAMRIPGTSLTQAITMQDLVEKRIRQFSEVKNVFAKLGTAEVATDPMPPNVADTFIILKSRKKWTNPKKTKPGLVQEIESAVQQIPGNNYEFTQPIQMRFNELISGVRSDVAVKVFGDDMDTLLKTAEAISAQLKQVPGAADVKVEQVSGLPLLTVEINRDVLARYGLQIGTVQEAVVIATGGKKGGELFEGDKRFDIVVRLPESLRSDPNVLRQIFIPLPLSKDGEQHFIPLSEVASLIRSESPNQISRENGKRRVVVTANVRNRDLSSFVSEAKKRIDGQVKLPSGYWITWGGQFEQLQSAYQRLQIVVPITLLGIFLLLFISFGKVRDALLVFTGIPLALTGGVFALWLRGIPLSISAGVGFIALSGVAVLNGLVMITFINKLREQKKVYLKDAVLQGSLARLRPVLMTALVASLGFVPMALATGTGSEVQRPLATVVIGGIISSTFLTLLVLPGLYYVFHGRRKKGQSKSEPQEQIM</sequence>
<accession>Q48815</accession>
<keyword id="KW-0997">Cell inner membrane</keyword>
<keyword id="KW-1003">Cell membrane</keyword>
<keyword id="KW-0472">Membrane</keyword>
<keyword id="KW-0812">Transmembrane</keyword>
<keyword id="KW-1133">Transmembrane helix</keyword>
<keyword id="KW-0813">Transport</keyword>
<dbReference type="EMBL" id="U49498">
    <property type="protein sequence ID" value="AAB05679.1"/>
    <property type="molecule type" value="Genomic_DNA"/>
</dbReference>
<dbReference type="SMR" id="Q48815"/>
<dbReference type="STRING" id="91892.BIZ52_11460"/>
<dbReference type="GO" id="GO:0005886">
    <property type="term" value="C:plasma membrane"/>
    <property type="evidence" value="ECO:0007669"/>
    <property type="project" value="UniProtKB-SubCell"/>
</dbReference>
<dbReference type="GO" id="GO:0008324">
    <property type="term" value="F:monoatomic cation transmembrane transporter activity"/>
    <property type="evidence" value="ECO:0007669"/>
    <property type="project" value="InterPro"/>
</dbReference>
<dbReference type="GO" id="GO:0042910">
    <property type="term" value="F:xenobiotic transmembrane transporter activity"/>
    <property type="evidence" value="ECO:0007669"/>
    <property type="project" value="TreeGrafter"/>
</dbReference>
<dbReference type="Gene3D" id="3.30.70.1430">
    <property type="entry name" value="Multidrug efflux transporter AcrB pore domain"/>
    <property type="match status" value="2"/>
</dbReference>
<dbReference type="Gene3D" id="3.30.70.1440">
    <property type="entry name" value="Multidrug efflux transporter AcrB pore domain"/>
    <property type="match status" value="1"/>
</dbReference>
<dbReference type="Gene3D" id="3.30.70.1320">
    <property type="entry name" value="Multidrug efflux transporter AcrB pore domain like"/>
    <property type="match status" value="1"/>
</dbReference>
<dbReference type="Gene3D" id="3.30.2090.10">
    <property type="entry name" value="Multidrug efflux transporter AcrB TolC docking domain, DN and DC subdomains"/>
    <property type="match status" value="2"/>
</dbReference>
<dbReference type="Gene3D" id="1.20.1640.10">
    <property type="entry name" value="Multidrug efflux transporter AcrB transmembrane domain"/>
    <property type="match status" value="2"/>
</dbReference>
<dbReference type="InterPro" id="IPR027463">
    <property type="entry name" value="AcrB_DN_DC_subdom"/>
</dbReference>
<dbReference type="InterPro" id="IPR001036">
    <property type="entry name" value="Acrflvin-R"/>
</dbReference>
<dbReference type="InterPro" id="IPR004763">
    <property type="entry name" value="CusA-like"/>
</dbReference>
<dbReference type="NCBIfam" id="TIGR00914">
    <property type="entry name" value="2A0601"/>
    <property type="match status" value="1"/>
</dbReference>
<dbReference type="PANTHER" id="PTHR32063">
    <property type="match status" value="1"/>
</dbReference>
<dbReference type="PANTHER" id="PTHR32063:SF24">
    <property type="entry name" value="CATION EFFLUX SYSTEM (ACRB_ACRD_ACRF FAMILY)"/>
    <property type="match status" value="1"/>
</dbReference>
<dbReference type="Pfam" id="PF00873">
    <property type="entry name" value="ACR_tran"/>
    <property type="match status" value="1"/>
</dbReference>
<dbReference type="PRINTS" id="PR00702">
    <property type="entry name" value="ACRIFLAVINRP"/>
</dbReference>
<dbReference type="SUPFAM" id="SSF82693">
    <property type="entry name" value="Multidrug efflux transporter AcrB pore domain, PN1, PN2, PC1 and PC2 subdomains"/>
    <property type="match status" value="3"/>
</dbReference>
<dbReference type="SUPFAM" id="SSF82714">
    <property type="entry name" value="Multidrug efflux transporter AcrB TolC docking domain, DN and DC subdomains"/>
    <property type="match status" value="2"/>
</dbReference>
<dbReference type="SUPFAM" id="SSF82866">
    <property type="entry name" value="Multidrug efflux transporter AcrB transmembrane domain"/>
    <property type="match status" value="2"/>
</dbReference>
<reference key="1">
    <citation type="journal article" date="1996" name="Infect. Immun.">
        <title>The Legionella pneumophila hel locus encodes intracellularly induced homologs of heavy-metal ion transporters of Alcaligenes spp.</title>
        <authorList>
            <person name="McClain M.S."/>
            <person name="Hurley M.C."/>
            <person name="Brieland J.K."/>
            <person name="Engleberg N.C."/>
        </authorList>
    </citation>
    <scope>NUCLEOTIDE SEQUENCE [GENOMIC DNA]</scope>
</reference>
<feature type="chain" id="PRO_0000161820" description="Protein HelA">
    <location>
        <begin position="1"/>
        <end position="1052"/>
    </location>
</feature>
<feature type="transmembrane region" description="Helical" evidence="1">
    <location>
        <begin position="14"/>
        <end position="34"/>
    </location>
</feature>
<feature type="transmembrane region" description="Helical" evidence="1">
    <location>
        <begin position="121"/>
        <end position="141"/>
    </location>
</feature>
<feature type="transmembrane region" description="Helical" evidence="1">
    <location>
        <begin position="348"/>
        <end position="368"/>
    </location>
</feature>
<feature type="transmembrane region" description="Helical" evidence="1">
    <location>
        <begin position="369"/>
        <end position="389"/>
    </location>
</feature>
<feature type="transmembrane region" description="Helical" evidence="1">
    <location>
        <begin position="393"/>
        <end position="413"/>
    </location>
</feature>
<feature type="transmembrane region" description="Helical" evidence="1">
    <location>
        <begin position="450"/>
        <end position="470"/>
    </location>
</feature>
<feature type="transmembrane region" description="Helical" evidence="1">
    <location>
        <begin position="483"/>
        <end position="503"/>
    </location>
</feature>
<feature type="transmembrane region" description="Helical" evidence="1">
    <location>
        <begin position="537"/>
        <end position="557"/>
    </location>
</feature>
<feature type="transmembrane region" description="Helical" evidence="1">
    <location>
        <begin position="878"/>
        <end position="898"/>
    </location>
</feature>
<feature type="transmembrane region" description="Helical" evidence="1">
    <location>
        <begin position="903"/>
        <end position="923"/>
    </location>
</feature>
<feature type="transmembrane region" description="Helical" evidence="1">
    <location>
        <begin position="934"/>
        <end position="954"/>
    </location>
</feature>
<feature type="transmembrane region" description="Helical" evidence="1">
    <location>
        <begin position="979"/>
        <end position="999"/>
    </location>
</feature>
<feature type="transmembrane region" description="Helical" evidence="1">
    <location>
        <begin position="1011"/>
        <end position="1031"/>
    </location>
</feature>
<organism>
    <name type="scientific">Legionella pneumophila</name>
    <dbReference type="NCBI Taxonomy" id="446"/>
    <lineage>
        <taxon>Bacteria</taxon>
        <taxon>Pseudomonadati</taxon>
        <taxon>Pseudomonadota</taxon>
        <taxon>Gammaproteobacteria</taxon>
        <taxon>Legionellales</taxon>
        <taxon>Legionellaceae</taxon>
        <taxon>Legionella</taxon>
    </lineage>
</organism>
<comment type="function">
    <text>Presumed to function with HelC and HelB in efflux of an unidentified substrate.</text>
</comment>
<comment type="subcellular location">
    <subcellularLocation>
        <location evidence="2">Cell inner membrane</location>
        <topology evidence="2">Multi-pass membrane protein</topology>
    </subcellularLocation>
</comment>
<comment type="similarity">
    <text evidence="2">Belongs to the resistance-nodulation-cell division (RND) (TC 2.A.6) family.</text>
</comment>
<gene>
    <name type="primary">helA</name>
</gene>
<proteinExistence type="inferred from homology"/>
<name>HELA_LEGPN</name>
<protein>
    <recommendedName>
        <fullName>Protein HelA</fullName>
    </recommendedName>
</protein>